<name>FOSL2_CHICK</name>
<sequence length="323" mass="35242">MYQDYPGSFDTSSRGSSGSPGHPEPYSAGAAQQKFRVDMPGSGSAFIPTINAITTSQDLQWMVQPTVITSMSSPYSRSHPYSHPLPPLSSVAGHTALQRPGVIKTIGTTVGRRRRDEQLSPEEEEKRRIRRERNKLAAAKCRNRRRELTEKLQAETEVLEEEKSVLQKEIAELQKEKEKLEFMLVAHSPVCKISPEERRSPPTSSLQSVRTGASGAVVVKQEPVEEEIPSSSLVLDKAQRSVIKPISIAGGYYGEEALNTPIVVTSTPAITPGSSNLVFTYPNVLDQESPLSPSESCSKAHRRSSSSGDQSSDSLNSPTLLAL</sequence>
<comment type="subunit">
    <text>Heterodimer with JUN.</text>
</comment>
<comment type="subcellular location">
    <subcellularLocation>
        <location>Nucleus</location>
    </subcellularLocation>
</comment>
<comment type="induction">
    <text>Serum inducible, and cycloheximide superinducible.</text>
</comment>
<comment type="similarity">
    <text evidence="3">Belongs to the bZIP family. Fos subfamily.</text>
</comment>
<protein>
    <recommendedName>
        <fullName>Fos-related antigen 2</fullName>
        <shortName>FRA-2</shortName>
    </recommendedName>
</protein>
<proteinExistence type="evidence at protein level"/>
<dbReference type="EMBL" id="D10876">
    <property type="protein sequence ID" value="BAA01644.1"/>
    <property type="molecule type" value="Genomic_DNA"/>
</dbReference>
<dbReference type="PIR" id="A35909">
    <property type="entry name" value="A35909"/>
</dbReference>
<dbReference type="RefSeq" id="NP_001039301.1">
    <property type="nucleotide sequence ID" value="NM_001045836.2"/>
</dbReference>
<dbReference type="SMR" id="P18625"/>
<dbReference type="FunCoup" id="P18625">
    <property type="interactions" value="235"/>
</dbReference>
<dbReference type="STRING" id="9031.ENSGALP00000016284"/>
<dbReference type="GlyGen" id="P18625">
    <property type="glycosylation" value="1 site"/>
</dbReference>
<dbReference type="PaxDb" id="9031-ENSGALP00000016284"/>
<dbReference type="Ensembl" id="ENSGALT00000127033">
    <property type="protein sequence ID" value="ENSGALP00000094351"/>
    <property type="gene ID" value="ENSGALG00000060920"/>
</dbReference>
<dbReference type="Ensembl" id="ENSGALT00010048362.1">
    <property type="protein sequence ID" value="ENSGALP00010028515.1"/>
    <property type="gene ID" value="ENSGALG00010020023.1"/>
</dbReference>
<dbReference type="GeneID" id="421416"/>
<dbReference type="KEGG" id="gga:421416"/>
<dbReference type="CTD" id="2355"/>
<dbReference type="VEuPathDB" id="HostDB:geneid_421416"/>
<dbReference type="eggNOG" id="KOG1414">
    <property type="taxonomic scope" value="Eukaryota"/>
</dbReference>
<dbReference type="GeneTree" id="ENSGT00940000158876"/>
<dbReference type="InParanoid" id="P18625"/>
<dbReference type="OMA" id="MYQDFPG"/>
<dbReference type="OrthoDB" id="5866312at2759"/>
<dbReference type="PhylomeDB" id="P18625"/>
<dbReference type="PRO" id="PR:P18625"/>
<dbReference type="Proteomes" id="UP000000539">
    <property type="component" value="Chromosome 3"/>
</dbReference>
<dbReference type="Bgee" id="ENSGALG00000010036">
    <property type="expression patterns" value="Expressed in spermatocyte and 14 other cell types or tissues"/>
</dbReference>
<dbReference type="GO" id="GO:0005654">
    <property type="term" value="C:nucleoplasm"/>
    <property type="evidence" value="ECO:0007669"/>
    <property type="project" value="Ensembl"/>
</dbReference>
<dbReference type="GO" id="GO:0005634">
    <property type="term" value="C:nucleus"/>
    <property type="evidence" value="ECO:0000318"/>
    <property type="project" value="GO_Central"/>
</dbReference>
<dbReference type="GO" id="GO:0035976">
    <property type="term" value="C:transcription factor AP-1 complex"/>
    <property type="evidence" value="ECO:0007669"/>
    <property type="project" value="Ensembl"/>
</dbReference>
<dbReference type="GO" id="GO:0003682">
    <property type="term" value="F:chromatin binding"/>
    <property type="evidence" value="ECO:0007669"/>
    <property type="project" value="Ensembl"/>
</dbReference>
<dbReference type="GO" id="GO:0001228">
    <property type="term" value="F:DNA-binding transcription activator activity, RNA polymerase II-specific"/>
    <property type="evidence" value="ECO:0007669"/>
    <property type="project" value="Ensembl"/>
</dbReference>
<dbReference type="GO" id="GO:0000981">
    <property type="term" value="F:DNA-binding transcription factor activity, RNA polymerase II-specific"/>
    <property type="evidence" value="ECO:0000318"/>
    <property type="project" value="GO_Central"/>
</dbReference>
<dbReference type="GO" id="GO:0000978">
    <property type="term" value="F:RNA polymerase II cis-regulatory region sequence-specific DNA binding"/>
    <property type="evidence" value="ECO:0000318"/>
    <property type="project" value="GO_Central"/>
</dbReference>
<dbReference type="GO" id="GO:0030183">
    <property type="term" value="P:B cell differentiation"/>
    <property type="evidence" value="ECO:0007669"/>
    <property type="project" value="Ensembl"/>
</dbReference>
<dbReference type="GO" id="GO:0042100">
    <property type="term" value="P:B cell proliferation"/>
    <property type="evidence" value="ECO:0007669"/>
    <property type="project" value="Ensembl"/>
</dbReference>
<dbReference type="GO" id="GO:0030282">
    <property type="term" value="P:bone mineralization"/>
    <property type="evidence" value="ECO:0007669"/>
    <property type="project" value="Ensembl"/>
</dbReference>
<dbReference type="GO" id="GO:0000902">
    <property type="term" value="P:cell morphogenesis"/>
    <property type="evidence" value="ECO:0007669"/>
    <property type="project" value="Ensembl"/>
</dbReference>
<dbReference type="GO" id="GO:0002062">
    <property type="term" value="P:chondrocyte differentiation"/>
    <property type="evidence" value="ECO:0007669"/>
    <property type="project" value="Ensembl"/>
</dbReference>
<dbReference type="GO" id="GO:0035988">
    <property type="term" value="P:chondrocyte proliferation"/>
    <property type="evidence" value="ECO:0007669"/>
    <property type="project" value="Ensembl"/>
</dbReference>
<dbReference type="GO" id="GO:0032964">
    <property type="term" value="P:collagen biosynthetic process"/>
    <property type="evidence" value="ECO:0007669"/>
    <property type="project" value="Ensembl"/>
</dbReference>
<dbReference type="GO" id="GO:1904606">
    <property type="term" value="P:fat cell apoptotic process"/>
    <property type="evidence" value="ECO:0007669"/>
    <property type="project" value="Ensembl"/>
</dbReference>
<dbReference type="GO" id="GO:0045444">
    <property type="term" value="P:fat cell differentiation"/>
    <property type="evidence" value="ECO:0007669"/>
    <property type="project" value="Ensembl"/>
</dbReference>
<dbReference type="GO" id="GO:0060613">
    <property type="term" value="P:fat pad development"/>
    <property type="evidence" value="ECO:0007669"/>
    <property type="project" value="Ensembl"/>
</dbReference>
<dbReference type="GO" id="GO:0010467">
    <property type="term" value="P:gene expression"/>
    <property type="evidence" value="ECO:0007669"/>
    <property type="project" value="Ensembl"/>
</dbReference>
<dbReference type="GO" id="GO:0042593">
    <property type="term" value="P:glucose homeostasis"/>
    <property type="evidence" value="ECO:0007669"/>
    <property type="project" value="Ensembl"/>
</dbReference>
<dbReference type="GO" id="GO:0003417">
    <property type="term" value="P:growth plate cartilage development"/>
    <property type="evidence" value="ECO:0007669"/>
    <property type="project" value="Ensembl"/>
</dbReference>
<dbReference type="GO" id="GO:0048873">
    <property type="term" value="P:homeostasis of number of cells within a tissue"/>
    <property type="evidence" value="ECO:0007669"/>
    <property type="project" value="Ensembl"/>
</dbReference>
<dbReference type="GO" id="GO:0002437">
    <property type="term" value="P:inflammatory response to antigenic stimulus"/>
    <property type="evidence" value="ECO:0007669"/>
    <property type="project" value="Ensembl"/>
</dbReference>
<dbReference type="GO" id="GO:0045087">
    <property type="term" value="P:innate immune response"/>
    <property type="evidence" value="ECO:0007669"/>
    <property type="project" value="Ensembl"/>
</dbReference>
<dbReference type="GO" id="GO:1901142">
    <property type="term" value="P:insulin metabolic process"/>
    <property type="evidence" value="ECO:0007669"/>
    <property type="project" value="Ensembl"/>
</dbReference>
<dbReference type="GO" id="GO:0003334">
    <property type="term" value="P:keratinocyte development"/>
    <property type="evidence" value="ECO:0007669"/>
    <property type="project" value="Ensembl"/>
</dbReference>
<dbReference type="GO" id="GO:0060427">
    <property type="term" value="P:lung connective tissue development"/>
    <property type="evidence" value="ECO:0007669"/>
    <property type="project" value="Ensembl"/>
</dbReference>
<dbReference type="GO" id="GO:0030225">
    <property type="term" value="P:macrophage differentiation"/>
    <property type="evidence" value="ECO:0007669"/>
    <property type="project" value="Ensembl"/>
</dbReference>
<dbReference type="GO" id="GO:0070254">
    <property type="term" value="P:mucus secretion"/>
    <property type="evidence" value="ECO:0007669"/>
    <property type="project" value="Ensembl"/>
</dbReference>
<dbReference type="GO" id="GO:0035264">
    <property type="term" value="P:multicellular organism growth"/>
    <property type="evidence" value="ECO:0007669"/>
    <property type="project" value="Ensembl"/>
</dbReference>
<dbReference type="GO" id="GO:0036446">
    <property type="term" value="P:myofibroblast differentiation"/>
    <property type="evidence" value="ECO:0007669"/>
    <property type="project" value="Ensembl"/>
</dbReference>
<dbReference type="GO" id="GO:0030223">
    <property type="term" value="P:neutrophil differentiation"/>
    <property type="evidence" value="ECO:0007669"/>
    <property type="project" value="Ensembl"/>
</dbReference>
<dbReference type="GO" id="GO:0001865">
    <property type="term" value="P:NK T cell differentiation"/>
    <property type="evidence" value="ECO:0007669"/>
    <property type="project" value="Ensembl"/>
</dbReference>
<dbReference type="GO" id="GO:0001649">
    <property type="term" value="P:osteoblast differentiation"/>
    <property type="evidence" value="ECO:0007669"/>
    <property type="project" value="Ensembl"/>
</dbReference>
<dbReference type="GO" id="GO:0030316">
    <property type="term" value="P:osteoclast differentiation"/>
    <property type="evidence" value="ECO:0007669"/>
    <property type="project" value="Ensembl"/>
</dbReference>
<dbReference type="GO" id="GO:0048146">
    <property type="term" value="P:positive regulation of fibroblast proliferation"/>
    <property type="evidence" value="ECO:0007669"/>
    <property type="project" value="Ensembl"/>
</dbReference>
<dbReference type="GO" id="GO:0040014">
    <property type="term" value="P:regulation of multicellular organism growth"/>
    <property type="evidence" value="ECO:0007669"/>
    <property type="project" value="Ensembl"/>
</dbReference>
<dbReference type="GO" id="GO:1904760">
    <property type="term" value="P:regulation of myofibroblast differentiation"/>
    <property type="evidence" value="ECO:0007669"/>
    <property type="project" value="Ensembl"/>
</dbReference>
<dbReference type="GO" id="GO:0006357">
    <property type="term" value="P:regulation of transcription by RNA polymerase II"/>
    <property type="evidence" value="ECO:0000318"/>
    <property type="project" value="GO_Central"/>
</dbReference>
<dbReference type="GO" id="GO:1904975">
    <property type="term" value="P:response to bleomycin"/>
    <property type="evidence" value="ECO:0007669"/>
    <property type="project" value="Ensembl"/>
</dbReference>
<dbReference type="GO" id="GO:0051384">
    <property type="term" value="P:response to glucocorticoid"/>
    <property type="evidence" value="ECO:0007669"/>
    <property type="project" value="Ensembl"/>
</dbReference>
<dbReference type="GO" id="GO:0140459">
    <property type="term" value="P:response to Gram-positive bacterium"/>
    <property type="evidence" value="ECO:0007669"/>
    <property type="project" value="Ensembl"/>
</dbReference>
<dbReference type="GO" id="GO:0001666">
    <property type="term" value="P:response to hypoxia"/>
    <property type="evidence" value="ECO:0007669"/>
    <property type="project" value="Ensembl"/>
</dbReference>
<dbReference type="GO" id="GO:0035962">
    <property type="term" value="P:response to interleukin-13"/>
    <property type="evidence" value="ECO:0007669"/>
    <property type="project" value="Ensembl"/>
</dbReference>
<dbReference type="GO" id="GO:0098760">
    <property type="term" value="P:response to interleukin-7"/>
    <property type="evidence" value="ECO:0007669"/>
    <property type="project" value="Ensembl"/>
</dbReference>
<dbReference type="GO" id="GO:1990823">
    <property type="term" value="P:response to leukemia inhibitory factor"/>
    <property type="evidence" value="ECO:0007669"/>
    <property type="project" value="Ensembl"/>
</dbReference>
<dbReference type="GO" id="GO:0032496">
    <property type="term" value="P:response to lipopolysaccharide"/>
    <property type="evidence" value="ECO:0007669"/>
    <property type="project" value="Ensembl"/>
</dbReference>
<dbReference type="GO" id="GO:0009410">
    <property type="term" value="P:response to xenobiotic stimulus"/>
    <property type="evidence" value="ECO:0007669"/>
    <property type="project" value="Ensembl"/>
</dbReference>
<dbReference type="GO" id="GO:0048745">
    <property type="term" value="P:smooth muscle tissue development"/>
    <property type="evidence" value="ECO:0007669"/>
    <property type="project" value="Ensembl"/>
</dbReference>
<dbReference type="GO" id="GO:0050852">
    <property type="term" value="P:T cell receptor signaling pathway"/>
    <property type="evidence" value="ECO:0007669"/>
    <property type="project" value="Ensembl"/>
</dbReference>
<dbReference type="GO" id="GO:0048771">
    <property type="term" value="P:tissue remodeling"/>
    <property type="evidence" value="ECO:0007669"/>
    <property type="project" value="Ensembl"/>
</dbReference>
<dbReference type="CDD" id="cd14721">
    <property type="entry name" value="bZIP_Fos"/>
    <property type="match status" value="1"/>
</dbReference>
<dbReference type="FunFam" id="1.20.5.170:FF:000006">
    <property type="entry name" value="fos-related antigen 2 isoform X1"/>
    <property type="match status" value="1"/>
</dbReference>
<dbReference type="Gene3D" id="1.20.5.170">
    <property type="match status" value="1"/>
</dbReference>
<dbReference type="InterPro" id="IPR000837">
    <property type="entry name" value="AP-1"/>
</dbReference>
<dbReference type="InterPro" id="IPR004827">
    <property type="entry name" value="bZIP"/>
</dbReference>
<dbReference type="InterPro" id="IPR046347">
    <property type="entry name" value="bZIP_sf"/>
</dbReference>
<dbReference type="PANTHER" id="PTHR23351">
    <property type="entry name" value="FOS TRANSCRIPTION FACTOR-RELATED"/>
    <property type="match status" value="1"/>
</dbReference>
<dbReference type="PANTHER" id="PTHR23351:SF25">
    <property type="entry name" value="FOS-RELATED ANTIGEN 2"/>
    <property type="match status" value="1"/>
</dbReference>
<dbReference type="Pfam" id="PF00170">
    <property type="entry name" value="bZIP_1"/>
    <property type="match status" value="1"/>
</dbReference>
<dbReference type="PRINTS" id="PR00042">
    <property type="entry name" value="LEUZIPPRFOS"/>
</dbReference>
<dbReference type="SMART" id="SM00338">
    <property type="entry name" value="BRLZ"/>
    <property type="match status" value="1"/>
</dbReference>
<dbReference type="SUPFAM" id="SSF57959">
    <property type="entry name" value="Leucine zipper domain"/>
    <property type="match status" value="1"/>
</dbReference>
<dbReference type="PROSITE" id="PS50217">
    <property type="entry name" value="BZIP"/>
    <property type="match status" value="1"/>
</dbReference>
<dbReference type="PROSITE" id="PS00036">
    <property type="entry name" value="BZIP_BASIC"/>
    <property type="match status" value="1"/>
</dbReference>
<organism>
    <name type="scientific">Gallus gallus</name>
    <name type="common">Chicken</name>
    <dbReference type="NCBI Taxonomy" id="9031"/>
    <lineage>
        <taxon>Eukaryota</taxon>
        <taxon>Metazoa</taxon>
        <taxon>Chordata</taxon>
        <taxon>Craniata</taxon>
        <taxon>Vertebrata</taxon>
        <taxon>Euteleostomi</taxon>
        <taxon>Archelosauria</taxon>
        <taxon>Archosauria</taxon>
        <taxon>Dinosauria</taxon>
        <taxon>Saurischia</taxon>
        <taxon>Theropoda</taxon>
        <taxon>Coelurosauria</taxon>
        <taxon>Aves</taxon>
        <taxon>Neognathae</taxon>
        <taxon>Galloanserae</taxon>
        <taxon>Galliformes</taxon>
        <taxon>Phasianidae</taxon>
        <taxon>Phasianinae</taxon>
        <taxon>Gallus</taxon>
    </lineage>
</organism>
<reference key="1">
    <citation type="journal article" date="1990" name="Proc. Natl. Acad. Sci. U.S.A.">
        <title>Isolation and characterization of fra-2, an additional member of the fos gene family.</title>
        <authorList>
            <person name="Nishina H."/>
            <person name="Sato H."/>
            <person name="Suzuki T."/>
            <person name="Iba H."/>
        </authorList>
    </citation>
    <scope>NUCLEOTIDE SEQUENCE [GENOMIC DNA]</scope>
    <scope>PARTIAL PROTEIN SEQUENCE</scope>
</reference>
<accession>P18625</accession>
<gene>
    <name type="primary">FOSL2</name>
    <name type="synonym">FRA-2</name>
</gene>
<feature type="chain" id="PRO_0000076482" description="Fos-related antigen 2">
    <location>
        <begin position="1"/>
        <end position="323"/>
    </location>
</feature>
<feature type="domain" description="bZIP" evidence="1">
    <location>
        <begin position="124"/>
        <end position="187"/>
    </location>
</feature>
<feature type="region of interest" description="Disordered" evidence="2">
    <location>
        <begin position="1"/>
        <end position="31"/>
    </location>
</feature>
<feature type="region of interest" description="Basic motif" evidence="1">
    <location>
        <begin position="126"/>
        <end position="128"/>
    </location>
</feature>
<feature type="region of interest" description="Leucine-zipper" evidence="1">
    <location>
        <begin position="129"/>
        <end position="136"/>
    </location>
</feature>
<feature type="region of interest" description="Disordered" evidence="2">
    <location>
        <begin position="194"/>
        <end position="214"/>
    </location>
</feature>
<feature type="region of interest" description="Disordered" evidence="2">
    <location>
        <begin position="288"/>
        <end position="323"/>
    </location>
</feature>
<feature type="compositionally biased region" description="Low complexity" evidence="2">
    <location>
        <begin position="1"/>
        <end position="27"/>
    </location>
</feature>
<feature type="compositionally biased region" description="Low complexity" evidence="2">
    <location>
        <begin position="305"/>
        <end position="317"/>
    </location>
</feature>
<keyword id="KW-0903">Direct protein sequencing</keyword>
<keyword id="KW-0238">DNA-binding</keyword>
<keyword id="KW-0539">Nucleus</keyword>
<keyword id="KW-0656">Proto-oncogene</keyword>
<keyword id="KW-1185">Reference proteome</keyword>
<evidence type="ECO:0000255" key="1">
    <source>
        <dbReference type="PROSITE-ProRule" id="PRU00978"/>
    </source>
</evidence>
<evidence type="ECO:0000256" key="2">
    <source>
        <dbReference type="SAM" id="MobiDB-lite"/>
    </source>
</evidence>
<evidence type="ECO:0000305" key="3"/>